<accession>Q8CQ03</accession>
<feature type="chain" id="PRO_0000164341" description="Protein NrdI">
    <location>
        <begin position="1"/>
        <end position="132"/>
    </location>
</feature>
<name>NRDI_STAES</name>
<reference key="1">
    <citation type="journal article" date="2003" name="Mol. Microbiol.">
        <title>Genome-based analysis of virulence genes in a non-biofilm-forming Staphylococcus epidermidis strain (ATCC 12228).</title>
        <authorList>
            <person name="Zhang Y.-Q."/>
            <person name="Ren S.-X."/>
            <person name="Li H.-L."/>
            <person name="Wang Y.-X."/>
            <person name="Fu G."/>
            <person name="Yang J."/>
            <person name="Qin Z.-Q."/>
            <person name="Miao Y.-G."/>
            <person name="Wang W.-Y."/>
            <person name="Chen R.-S."/>
            <person name="Shen Y."/>
            <person name="Chen Z."/>
            <person name="Yuan Z.-H."/>
            <person name="Zhao G.-P."/>
            <person name="Qu D."/>
            <person name="Danchin A."/>
            <person name="Wen Y.-M."/>
        </authorList>
    </citation>
    <scope>NUCLEOTIDE SEQUENCE [LARGE SCALE GENOMIC DNA]</scope>
    <source>
        <strain>ATCC 12228 / FDA PCI 1200</strain>
    </source>
</reference>
<evidence type="ECO:0000255" key="1">
    <source>
        <dbReference type="HAMAP-Rule" id="MF_00128"/>
    </source>
</evidence>
<gene>
    <name evidence="1" type="primary">nrdI</name>
    <name type="ordered locus">SE_0512</name>
</gene>
<protein>
    <recommendedName>
        <fullName evidence="1">Protein NrdI</fullName>
    </recommendedName>
</protein>
<dbReference type="EMBL" id="AE015929">
    <property type="protein sequence ID" value="AAO04109.1"/>
    <property type="molecule type" value="Genomic_DNA"/>
</dbReference>
<dbReference type="RefSeq" id="NP_764067.1">
    <property type="nucleotide sequence ID" value="NC_004461.1"/>
</dbReference>
<dbReference type="RefSeq" id="WP_001829589.1">
    <property type="nucleotide sequence ID" value="NZ_WBME01000015.1"/>
</dbReference>
<dbReference type="SMR" id="Q8CQ03"/>
<dbReference type="GeneID" id="50019341"/>
<dbReference type="KEGG" id="sep:SE_0512"/>
<dbReference type="PATRIC" id="fig|176280.10.peg.484"/>
<dbReference type="eggNOG" id="COG1780">
    <property type="taxonomic scope" value="Bacteria"/>
</dbReference>
<dbReference type="HOGENOM" id="CLU_114845_3_0_9"/>
<dbReference type="OrthoDB" id="350535at2"/>
<dbReference type="Proteomes" id="UP000001411">
    <property type="component" value="Chromosome"/>
</dbReference>
<dbReference type="GO" id="GO:0010181">
    <property type="term" value="F:FMN binding"/>
    <property type="evidence" value="ECO:0007669"/>
    <property type="project" value="InterPro"/>
</dbReference>
<dbReference type="GO" id="GO:0036211">
    <property type="term" value="P:protein modification process"/>
    <property type="evidence" value="ECO:0007669"/>
    <property type="project" value="InterPro"/>
</dbReference>
<dbReference type="Gene3D" id="3.40.50.360">
    <property type="match status" value="1"/>
</dbReference>
<dbReference type="HAMAP" id="MF_00128">
    <property type="entry name" value="NrdI"/>
    <property type="match status" value="1"/>
</dbReference>
<dbReference type="InterPro" id="IPR029039">
    <property type="entry name" value="Flavoprotein-like_sf"/>
</dbReference>
<dbReference type="InterPro" id="IPR020852">
    <property type="entry name" value="RNR_Ib_NrdI_bac"/>
</dbReference>
<dbReference type="InterPro" id="IPR004465">
    <property type="entry name" value="RNR_NrdI"/>
</dbReference>
<dbReference type="NCBIfam" id="TIGR00333">
    <property type="entry name" value="nrdI"/>
    <property type="match status" value="1"/>
</dbReference>
<dbReference type="PANTHER" id="PTHR37297">
    <property type="entry name" value="PROTEIN NRDI"/>
    <property type="match status" value="1"/>
</dbReference>
<dbReference type="PANTHER" id="PTHR37297:SF1">
    <property type="entry name" value="PROTEIN NRDI"/>
    <property type="match status" value="1"/>
</dbReference>
<dbReference type="Pfam" id="PF07972">
    <property type="entry name" value="Flavodoxin_NdrI"/>
    <property type="match status" value="1"/>
</dbReference>
<dbReference type="PIRSF" id="PIRSF005087">
    <property type="entry name" value="NrdI"/>
    <property type="match status" value="1"/>
</dbReference>
<dbReference type="SUPFAM" id="SSF52218">
    <property type="entry name" value="Flavoproteins"/>
    <property type="match status" value="1"/>
</dbReference>
<sequence>MKVVYYSFSGNVRRFISRAGIKDTFEITQDNCNESVNEPYILVTGTIGFGEVPQPVQSFLNVNHTQLQAVAASGNRNWGQNFAKAGHTISEEYKVPLMMKFEVQGTNKDIIEFKDKVGNFNENHGRKEIQSY</sequence>
<proteinExistence type="inferred from homology"/>
<comment type="function">
    <text evidence="1">Probably involved in ribonucleotide reductase function.</text>
</comment>
<comment type="similarity">
    <text evidence="1">Belongs to the NrdI family.</text>
</comment>
<organism>
    <name type="scientific">Staphylococcus epidermidis (strain ATCC 12228 / FDA PCI 1200)</name>
    <dbReference type="NCBI Taxonomy" id="176280"/>
    <lineage>
        <taxon>Bacteria</taxon>
        <taxon>Bacillati</taxon>
        <taxon>Bacillota</taxon>
        <taxon>Bacilli</taxon>
        <taxon>Bacillales</taxon>
        <taxon>Staphylococcaceae</taxon>
        <taxon>Staphylococcus</taxon>
    </lineage>
</organism>